<comment type="function">
    <text>Tubulin is the major constituent of microtubules, a cylinder consisting of laterally associated linear protofilaments composed of alpha- and beta-tubulin heterodimers. Microtubules grow by the addition of GTP-tubulin dimers to the microtubule end, where a stabilizing cap forms. Below the cap, tubulin dimers are in GDP-bound state, owing to GTPase activity of alpha-tubulin.</text>
</comment>
<comment type="catalytic activity">
    <reaction evidence="2">
        <text>GTP + H2O = GDP + phosphate + H(+)</text>
        <dbReference type="Rhea" id="RHEA:19669"/>
        <dbReference type="ChEBI" id="CHEBI:15377"/>
        <dbReference type="ChEBI" id="CHEBI:15378"/>
        <dbReference type="ChEBI" id="CHEBI:37565"/>
        <dbReference type="ChEBI" id="CHEBI:43474"/>
        <dbReference type="ChEBI" id="CHEBI:58189"/>
    </reaction>
    <physiologicalReaction direction="left-to-right" evidence="2">
        <dbReference type="Rhea" id="RHEA:19670"/>
    </physiologicalReaction>
</comment>
<comment type="cofactor">
    <cofactor evidence="2">
        <name>Mg(2+)</name>
        <dbReference type="ChEBI" id="CHEBI:18420"/>
    </cofactor>
</comment>
<comment type="subunit">
    <text>Dimer of alpha and beta chains. A typical microtubule is a hollow water-filled tube with an outer diameter of 25 nm and an inner diameter of 15 nM. Alpha-beta heterodimers associate head-to-tail to form protofilaments running lengthwise along the microtubule wall with the beta-tubulin subunit facing the microtubule plus end conferring a structural polarity. Microtubules usually have 13 protofilaments but different protofilament numbers can be found in some organisms and specialized cells.</text>
</comment>
<comment type="subcellular location">
    <subcellularLocation>
        <location>Cytoplasm</location>
        <location>Cytoskeleton</location>
    </subcellularLocation>
</comment>
<comment type="PTM">
    <text evidence="1">Undergoes a tyrosination/detyrosination cycle, the cyclic removal and re-addition of a C-terminal tyrosine residue by the enzymes tubulin tyrosine carboxypeptidase (TTCP) and tubulin tyrosine ligase (TTL), respectively.</text>
</comment>
<comment type="similarity">
    <text evidence="3">Belongs to the tubulin family.</text>
</comment>
<feature type="chain" id="PRO_0000048206" description="Tubulin alpha-1 chain">
    <location>
        <begin position="1"/>
        <end position="450"/>
    </location>
</feature>
<feature type="active site" evidence="2">
    <location>
        <position position="254"/>
    </location>
</feature>
<feature type="binding site" evidence="2">
    <location>
        <position position="11"/>
    </location>
    <ligand>
        <name>GTP</name>
        <dbReference type="ChEBI" id="CHEBI:37565"/>
    </ligand>
</feature>
<feature type="binding site" evidence="2">
    <location>
        <position position="71"/>
    </location>
    <ligand>
        <name>GTP</name>
        <dbReference type="ChEBI" id="CHEBI:37565"/>
    </ligand>
</feature>
<feature type="binding site" evidence="2">
    <location>
        <position position="71"/>
    </location>
    <ligand>
        <name>Mg(2+)</name>
        <dbReference type="ChEBI" id="CHEBI:18420"/>
    </ligand>
</feature>
<feature type="binding site" evidence="2">
    <location>
        <position position="144"/>
    </location>
    <ligand>
        <name>GTP</name>
        <dbReference type="ChEBI" id="CHEBI:37565"/>
    </ligand>
</feature>
<feature type="binding site" evidence="2">
    <location>
        <position position="145"/>
    </location>
    <ligand>
        <name>GTP</name>
        <dbReference type="ChEBI" id="CHEBI:37565"/>
    </ligand>
</feature>
<feature type="binding site" evidence="2">
    <location>
        <position position="179"/>
    </location>
    <ligand>
        <name>GTP</name>
        <dbReference type="ChEBI" id="CHEBI:37565"/>
    </ligand>
</feature>
<feature type="binding site" evidence="2">
    <location>
        <position position="206"/>
    </location>
    <ligand>
        <name>GTP</name>
        <dbReference type="ChEBI" id="CHEBI:37565"/>
    </ligand>
</feature>
<feature type="binding site" evidence="2">
    <location>
        <position position="228"/>
    </location>
    <ligand>
        <name>GTP</name>
        <dbReference type="ChEBI" id="CHEBI:37565"/>
    </ligand>
</feature>
<feature type="site" description="Involved in polymerization" evidence="1">
    <location>
        <position position="450"/>
    </location>
</feature>
<keyword id="KW-0963">Cytoplasm</keyword>
<keyword id="KW-0206">Cytoskeleton</keyword>
<keyword id="KW-0903">Direct protein sequencing</keyword>
<keyword id="KW-0342">GTP-binding</keyword>
<keyword id="KW-0378">Hydrolase</keyword>
<keyword id="KW-0460">Magnesium</keyword>
<keyword id="KW-0479">Metal-binding</keyword>
<keyword id="KW-0493">Microtubule</keyword>
<keyword id="KW-0547">Nucleotide-binding</keyword>
<keyword id="KW-1185">Reference proteome</keyword>
<organism>
    <name type="scientific">Oryza sativa subsp. japonica</name>
    <name type="common">Rice</name>
    <dbReference type="NCBI Taxonomy" id="39947"/>
    <lineage>
        <taxon>Eukaryota</taxon>
        <taxon>Viridiplantae</taxon>
        <taxon>Streptophyta</taxon>
        <taxon>Embryophyta</taxon>
        <taxon>Tracheophyta</taxon>
        <taxon>Spermatophyta</taxon>
        <taxon>Magnoliopsida</taxon>
        <taxon>Liliopsida</taxon>
        <taxon>Poales</taxon>
        <taxon>Poaceae</taxon>
        <taxon>BOP clade</taxon>
        <taxon>Oryzoideae</taxon>
        <taxon>Oryzeae</taxon>
        <taxon>Oryzinae</taxon>
        <taxon>Oryza</taxon>
        <taxon>Oryza sativa</taxon>
    </lineage>
</organism>
<reference key="1">
    <citation type="submission" date="1992-04" db="EMBL/GenBank/DDBJ databases">
        <title>Nucleotide sequence of alpha 1 tubulin gene from rice.</title>
        <authorList>
            <person name="An G."/>
            <person name="Finkel D."/>
            <person name="Chen W."/>
            <person name="Kim S."/>
            <person name="Kim Y."/>
        </authorList>
    </citation>
    <scope>NUCLEOTIDE SEQUENCE [MRNA]</scope>
    <source>
        <strain>cv. Nakdong</strain>
        <tissue>Anther</tissue>
    </source>
</reference>
<reference key="2">
    <citation type="journal article" date="1997" name="Biochim. Biophys. Acta">
        <title>Molecular cloning of three rice alpha-tubulin isotypes: differential expression in tissues and during flower development.</title>
        <authorList>
            <person name="Qin X."/>
            <person name="Giani S."/>
            <person name="Breviario D."/>
        </authorList>
    </citation>
    <scope>NUCLEOTIDE SEQUENCE [MRNA]</scope>
    <source>
        <strain>cv. Arborio</strain>
        <tissue>Coleoptile</tissue>
    </source>
</reference>
<reference key="3">
    <citation type="journal article" date="2005" name="Nature">
        <title>The map-based sequence of the rice genome.</title>
        <authorList>
            <consortium name="International rice genome sequencing project (IRGSP)"/>
        </authorList>
    </citation>
    <scope>NUCLEOTIDE SEQUENCE [LARGE SCALE GENOMIC DNA]</scope>
    <source>
        <strain>cv. Nipponbare</strain>
    </source>
</reference>
<reference key="4">
    <citation type="journal article" date="2013" name="Rice">
        <title>Improvement of the Oryza sativa Nipponbare reference genome using next generation sequence and optical map data.</title>
        <authorList>
            <person name="Kawahara Y."/>
            <person name="de la Bastide M."/>
            <person name="Hamilton J.P."/>
            <person name="Kanamori H."/>
            <person name="McCombie W.R."/>
            <person name="Ouyang S."/>
            <person name="Schwartz D.C."/>
            <person name="Tanaka T."/>
            <person name="Wu J."/>
            <person name="Zhou S."/>
            <person name="Childs K.L."/>
            <person name="Davidson R.M."/>
            <person name="Lin H."/>
            <person name="Quesada-Ocampo L."/>
            <person name="Vaillancourt B."/>
            <person name="Sakai H."/>
            <person name="Lee S.S."/>
            <person name="Kim J."/>
            <person name="Numa H."/>
            <person name="Itoh T."/>
            <person name="Buell C.R."/>
            <person name="Matsumoto T."/>
        </authorList>
    </citation>
    <scope>GENOME REANNOTATION</scope>
    <source>
        <strain>cv. Nipponbare</strain>
    </source>
</reference>
<reference key="5">
    <citation type="journal article" date="2004" name="Nucleic Acids Res.">
        <title>Rice proteome database based on two-dimensional polyacrylamide gel electrophoresis: its status in 2003.</title>
        <authorList>
            <person name="Komatsu S."/>
            <person name="Kojima K."/>
            <person name="Suzuki K."/>
            <person name="Ozaki K."/>
            <person name="Higo K."/>
        </authorList>
    </citation>
    <scope>PROTEIN SEQUENCE OF 1-6</scope>
    <source>
        <strain>cv. Nipponbare</strain>
        <tissue>Sheath</tissue>
    </source>
</reference>
<name>TBA1_ORYSJ</name>
<accession>P28752</accession>
<accession>Q6ZL40</accession>
<gene>
    <name type="primary">TUBA1</name>
    <name type="ordered locus">Os07g0574800</name>
    <name type="ordered locus">LOC_Os07g38730</name>
    <name type="ORF">OJ1562_B11.119</name>
    <name type="ORF">OJ1699_E05.40</name>
</gene>
<sequence>MREIISIHIGQAGIQVGNACWELYCLEHGIEPDGTMPSDTTVGVAHDAFNTFFSETGAGKHVPRAIFVDLEPTVIDEVRTGSYRQLFHPEQLISGKEDAANNFARGHYTVGKEIVDLCLDRVRKLADNCTGLQGFLVFNAVGGGTGSGLGSLLLERLSVDYGKKSKLGFTIYPSPQVSTAVVEPYNSVLSTHSLLEHTDVAVLLDNEAIYDICRRSLDIERPTYTNLNRLISQIISSLTTSLRFDGAINVDVTEFQTNLVPYPRIHFMLSSYAPVISAEKAYHEQLSVPEITNAVFEPSSMMAKCDPRHGKYMACCLMYRGDVVPKDVNAAVATIKTKRTVQFVDWCPTGFKCGINYQPPSVVPGGDLAKVQRAVCMISNNTAVAEVFSRIDHKFDLMYAKRAFVHWYVGEGMEEGEFSEAREDLAALEKDYEEVGAEGADDENDDGEDY</sequence>
<protein>
    <recommendedName>
        <fullName>Tubulin alpha-1 chain</fullName>
        <ecNumber evidence="2">3.6.5.-</ecNumber>
    </recommendedName>
</protein>
<dbReference type="EC" id="3.6.5.-" evidence="2"/>
<dbReference type="EMBL" id="Z11931">
    <property type="protein sequence ID" value="CAA77988.1"/>
    <property type="molecule type" value="mRNA"/>
</dbReference>
<dbReference type="EMBL" id="X91808">
    <property type="protein sequence ID" value="CAA62918.1"/>
    <property type="molecule type" value="mRNA"/>
</dbReference>
<dbReference type="EMBL" id="AP003758">
    <property type="protein sequence ID" value="BAD30236.1"/>
    <property type="molecule type" value="Genomic_DNA"/>
</dbReference>
<dbReference type="EMBL" id="AP003845">
    <property type="protein sequence ID" value="BAC83168.1"/>
    <property type="molecule type" value="Genomic_DNA"/>
</dbReference>
<dbReference type="EMBL" id="AP014963">
    <property type="protein sequence ID" value="BAT02277.1"/>
    <property type="molecule type" value="Genomic_DNA"/>
</dbReference>
<dbReference type="PIR" id="S20758">
    <property type="entry name" value="S20758"/>
</dbReference>
<dbReference type="RefSeq" id="XP_015647082.1">
    <property type="nucleotide sequence ID" value="XM_015791596.1"/>
</dbReference>
<dbReference type="SMR" id="P28752"/>
<dbReference type="BioGRID" id="812731">
    <property type="interactions" value="1"/>
</dbReference>
<dbReference type="FunCoup" id="P28752">
    <property type="interactions" value="2012"/>
</dbReference>
<dbReference type="STRING" id="39947.P28752"/>
<dbReference type="PaxDb" id="39947-P28752"/>
<dbReference type="EnsemblPlants" id="Os07t0574800-01">
    <property type="protein sequence ID" value="Os07t0574800-01"/>
    <property type="gene ID" value="Os07g0574800"/>
</dbReference>
<dbReference type="EnsemblPlants" id="Os07t0574800-02">
    <property type="protein sequence ID" value="Os07t0574800-02"/>
    <property type="gene ID" value="Os07g0574800"/>
</dbReference>
<dbReference type="Gramene" id="Os07t0574800-01">
    <property type="protein sequence ID" value="Os07t0574800-01"/>
    <property type="gene ID" value="Os07g0574800"/>
</dbReference>
<dbReference type="Gramene" id="Os07t0574800-02">
    <property type="protein sequence ID" value="Os07t0574800-02"/>
    <property type="gene ID" value="Os07g0574800"/>
</dbReference>
<dbReference type="eggNOG" id="KOG1376">
    <property type="taxonomic scope" value="Eukaryota"/>
</dbReference>
<dbReference type="HOGENOM" id="CLU_015718_0_0_1"/>
<dbReference type="InParanoid" id="P28752"/>
<dbReference type="OMA" id="ESCYDIC"/>
<dbReference type="OrthoDB" id="6049624at2759"/>
<dbReference type="Proteomes" id="UP000000763">
    <property type="component" value="Chromosome 7"/>
</dbReference>
<dbReference type="Proteomes" id="UP000059680">
    <property type="component" value="Chromosome 7"/>
</dbReference>
<dbReference type="ExpressionAtlas" id="P28752">
    <property type="expression patterns" value="baseline and differential"/>
</dbReference>
<dbReference type="GO" id="GO:0005737">
    <property type="term" value="C:cytoplasm"/>
    <property type="evidence" value="ECO:0000318"/>
    <property type="project" value="GO_Central"/>
</dbReference>
<dbReference type="GO" id="GO:0005874">
    <property type="term" value="C:microtubule"/>
    <property type="evidence" value="ECO:0000318"/>
    <property type="project" value="GO_Central"/>
</dbReference>
<dbReference type="GO" id="GO:0005525">
    <property type="term" value="F:GTP binding"/>
    <property type="evidence" value="ECO:0000318"/>
    <property type="project" value="GO_Central"/>
</dbReference>
<dbReference type="GO" id="GO:0016787">
    <property type="term" value="F:hydrolase activity"/>
    <property type="evidence" value="ECO:0007669"/>
    <property type="project" value="UniProtKB-KW"/>
</dbReference>
<dbReference type="GO" id="GO:0046872">
    <property type="term" value="F:metal ion binding"/>
    <property type="evidence" value="ECO:0007669"/>
    <property type="project" value="UniProtKB-KW"/>
</dbReference>
<dbReference type="GO" id="GO:0005200">
    <property type="term" value="F:structural constituent of cytoskeleton"/>
    <property type="evidence" value="ECO:0000318"/>
    <property type="project" value="GO_Central"/>
</dbReference>
<dbReference type="GO" id="GO:0000226">
    <property type="term" value="P:microtubule cytoskeleton organization"/>
    <property type="evidence" value="ECO:0000318"/>
    <property type="project" value="GO_Central"/>
</dbReference>
<dbReference type="GO" id="GO:0000278">
    <property type="term" value="P:mitotic cell cycle"/>
    <property type="evidence" value="ECO:0000318"/>
    <property type="project" value="GO_Central"/>
</dbReference>
<dbReference type="CDD" id="cd02186">
    <property type="entry name" value="alpha_tubulin"/>
    <property type="match status" value="1"/>
</dbReference>
<dbReference type="FunFam" id="1.10.287.600:FF:000005">
    <property type="entry name" value="Tubulin alpha chain"/>
    <property type="match status" value="1"/>
</dbReference>
<dbReference type="FunFam" id="3.30.1330.20:FF:000001">
    <property type="entry name" value="Tubulin alpha chain"/>
    <property type="match status" value="1"/>
</dbReference>
<dbReference type="FunFam" id="3.40.50.1440:FF:000004">
    <property type="entry name" value="Tubulin alpha chain"/>
    <property type="match status" value="1"/>
</dbReference>
<dbReference type="Gene3D" id="1.10.287.600">
    <property type="entry name" value="Helix hairpin bin"/>
    <property type="match status" value="1"/>
</dbReference>
<dbReference type="Gene3D" id="3.30.1330.20">
    <property type="entry name" value="Tubulin/FtsZ, C-terminal domain"/>
    <property type="match status" value="1"/>
</dbReference>
<dbReference type="Gene3D" id="3.40.50.1440">
    <property type="entry name" value="Tubulin/FtsZ, GTPase domain"/>
    <property type="match status" value="1"/>
</dbReference>
<dbReference type="InterPro" id="IPR002452">
    <property type="entry name" value="Alpha_tubulin"/>
</dbReference>
<dbReference type="InterPro" id="IPR013838">
    <property type="entry name" value="Beta-tubulin_BS"/>
</dbReference>
<dbReference type="InterPro" id="IPR008280">
    <property type="entry name" value="Tub_FtsZ_C"/>
</dbReference>
<dbReference type="InterPro" id="IPR000217">
    <property type="entry name" value="Tubulin"/>
</dbReference>
<dbReference type="InterPro" id="IPR037103">
    <property type="entry name" value="Tubulin/FtsZ-like_C"/>
</dbReference>
<dbReference type="InterPro" id="IPR018316">
    <property type="entry name" value="Tubulin/FtsZ_2-layer-sand-dom"/>
</dbReference>
<dbReference type="InterPro" id="IPR036525">
    <property type="entry name" value="Tubulin/FtsZ_GTPase_sf"/>
</dbReference>
<dbReference type="InterPro" id="IPR023123">
    <property type="entry name" value="Tubulin_C"/>
</dbReference>
<dbReference type="InterPro" id="IPR017975">
    <property type="entry name" value="Tubulin_CS"/>
</dbReference>
<dbReference type="InterPro" id="IPR003008">
    <property type="entry name" value="Tubulin_FtsZ_GTPase"/>
</dbReference>
<dbReference type="PANTHER" id="PTHR11588">
    <property type="entry name" value="TUBULIN"/>
    <property type="match status" value="1"/>
</dbReference>
<dbReference type="Pfam" id="PF00091">
    <property type="entry name" value="Tubulin"/>
    <property type="match status" value="1"/>
</dbReference>
<dbReference type="Pfam" id="PF03953">
    <property type="entry name" value="Tubulin_C"/>
    <property type="match status" value="1"/>
</dbReference>
<dbReference type="PRINTS" id="PR01162">
    <property type="entry name" value="ALPHATUBULIN"/>
</dbReference>
<dbReference type="PRINTS" id="PR01161">
    <property type="entry name" value="TUBULIN"/>
</dbReference>
<dbReference type="SMART" id="SM00864">
    <property type="entry name" value="Tubulin"/>
    <property type="match status" value="1"/>
</dbReference>
<dbReference type="SMART" id="SM00865">
    <property type="entry name" value="Tubulin_C"/>
    <property type="match status" value="1"/>
</dbReference>
<dbReference type="SUPFAM" id="SSF55307">
    <property type="entry name" value="Tubulin C-terminal domain-like"/>
    <property type="match status" value="1"/>
</dbReference>
<dbReference type="SUPFAM" id="SSF52490">
    <property type="entry name" value="Tubulin nucleotide-binding domain-like"/>
    <property type="match status" value="1"/>
</dbReference>
<dbReference type="PROSITE" id="PS00227">
    <property type="entry name" value="TUBULIN"/>
    <property type="match status" value="1"/>
</dbReference>
<proteinExistence type="evidence at protein level"/>
<evidence type="ECO:0000250" key="1"/>
<evidence type="ECO:0000250" key="2">
    <source>
        <dbReference type="UniProtKB" id="P68363"/>
    </source>
</evidence>
<evidence type="ECO:0000305" key="3"/>